<dbReference type="EC" id="6.3.5.-" evidence="1"/>
<dbReference type="EMBL" id="AM849034">
    <property type="protein sequence ID" value="CAQ01168.1"/>
    <property type="molecule type" value="Genomic_DNA"/>
</dbReference>
<dbReference type="RefSeq" id="WP_012298456.1">
    <property type="nucleotide sequence ID" value="NZ_MZMN01000003.1"/>
</dbReference>
<dbReference type="SMR" id="B0RGB2"/>
<dbReference type="STRING" id="31964.CMS1054"/>
<dbReference type="KEGG" id="cms:CMS1054"/>
<dbReference type="eggNOG" id="COG0064">
    <property type="taxonomic scope" value="Bacteria"/>
</dbReference>
<dbReference type="HOGENOM" id="CLU_019240_0_0_11"/>
<dbReference type="OrthoDB" id="9804078at2"/>
<dbReference type="Proteomes" id="UP000001318">
    <property type="component" value="Chromosome"/>
</dbReference>
<dbReference type="GO" id="GO:0050566">
    <property type="term" value="F:asparaginyl-tRNA synthase (glutamine-hydrolyzing) activity"/>
    <property type="evidence" value="ECO:0007669"/>
    <property type="project" value="RHEA"/>
</dbReference>
<dbReference type="GO" id="GO:0005524">
    <property type="term" value="F:ATP binding"/>
    <property type="evidence" value="ECO:0007669"/>
    <property type="project" value="UniProtKB-KW"/>
</dbReference>
<dbReference type="GO" id="GO:0050567">
    <property type="term" value="F:glutaminyl-tRNA synthase (glutamine-hydrolyzing) activity"/>
    <property type="evidence" value="ECO:0007669"/>
    <property type="project" value="UniProtKB-UniRule"/>
</dbReference>
<dbReference type="GO" id="GO:0070681">
    <property type="term" value="P:glutaminyl-tRNAGln biosynthesis via transamidation"/>
    <property type="evidence" value="ECO:0007669"/>
    <property type="project" value="TreeGrafter"/>
</dbReference>
<dbReference type="GO" id="GO:0006412">
    <property type="term" value="P:translation"/>
    <property type="evidence" value="ECO:0007669"/>
    <property type="project" value="UniProtKB-UniRule"/>
</dbReference>
<dbReference type="Gene3D" id="1.10.10.410">
    <property type="match status" value="1"/>
</dbReference>
<dbReference type="HAMAP" id="MF_00121">
    <property type="entry name" value="GatB"/>
    <property type="match status" value="1"/>
</dbReference>
<dbReference type="InterPro" id="IPR017959">
    <property type="entry name" value="Asn/Gln-tRNA_amidoTrfase_suB/E"/>
</dbReference>
<dbReference type="InterPro" id="IPR006075">
    <property type="entry name" value="Asn/Gln-tRNA_Trfase_suB/E_cat"/>
</dbReference>
<dbReference type="InterPro" id="IPR018027">
    <property type="entry name" value="Asn/Gln_amidotransferase"/>
</dbReference>
<dbReference type="InterPro" id="IPR003789">
    <property type="entry name" value="Asn/Gln_tRNA_amidoTrase-B-like"/>
</dbReference>
<dbReference type="InterPro" id="IPR004413">
    <property type="entry name" value="GatB"/>
</dbReference>
<dbReference type="InterPro" id="IPR023168">
    <property type="entry name" value="GatB_Yqey_C_2"/>
</dbReference>
<dbReference type="InterPro" id="IPR014746">
    <property type="entry name" value="Gln_synth/guanido_kin_cat_dom"/>
</dbReference>
<dbReference type="NCBIfam" id="TIGR00133">
    <property type="entry name" value="gatB"/>
    <property type="match status" value="1"/>
</dbReference>
<dbReference type="NCBIfam" id="NF004012">
    <property type="entry name" value="PRK05477.1-2"/>
    <property type="match status" value="1"/>
</dbReference>
<dbReference type="NCBIfam" id="NF004013">
    <property type="entry name" value="PRK05477.1-3"/>
    <property type="match status" value="1"/>
</dbReference>
<dbReference type="NCBIfam" id="NF004014">
    <property type="entry name" value="PRK05477.1-4"/>
    <property type="match status" value="1"/>
</dbReference>
<dbReference type="PANTHER" id="PTHR11659">
    <property type="entry name" value="GLUTAMYL-TRNA GLN AMIDOTRANSFERASE SUBUNIT B MITOCHONDRIAL AND PROKARYOTIC PET112-RELATED"/>
    <property type="match status" value="1"/>
</dbReference>
<dbReference type="PANTHER" id="PTHR11659:SF0">
    <property type="entry name" value="GLUTAMYL-TRNA(GLN) AMIDOTRANSFERASE SUBUNIT B, MITOCHONDRIAL"/>
    <property type="match status" value="1"/>
</dbReference>
<dbReference type="Pfam" id="PF02934">
    <property type="entry name" value="GatB_N"/>
    <property type="match status" value="1"/>
</dbReference>
<dbReference type="Pfam" id="PF02637">
    <property type="entry name" value="GatB_Yqey"/>
    <property type="match status" value="1"/>
</dbReference>
<dbReference type="SMART" id="SM00845">
    <property type="entry name" value="GatB_Yqey"/>
    <property type="match status" value="1"/>
</dbReference>
<dbReference type="SUPFAM" id="SSF89095">
    <property type="entry name" value="GatB/YqeY motif"/>
    <property type="match status" value="1"/>
</dbReference>
<dbReference type="SUPFAM" id="SSF55931">
    <property type="entry name" value="Glutamine synthetase/guanido kinase"/>
    <property type="match status" value="1"/>
</dbReference>
<feature type="chain" id="PRO_1000076153" description="Aspartyl/glutamyl-tRNA(Asn/Gln) amidotransferase subunit B">
    <location>
        <begin position="1"/>
        <end position="500"/>
    </location>
</feature>
<gene>
    <name evidence="1" type="primary">gatB</name>
    <name type="ordered locus">CMS1054</name>
</gene>
<name>GATB_CLASE</name>
<reference key="1">
    <citation type="journal article" date="2008" name="J. Bacteriol.">
        <title>Genome of the actinomycete plant pathogen Clavibacter michiganensis subsp. sepedonicus suggests recent niche adaptation.</title>
        <authorList>
            <person name="Bentley S.D."/>
            <person name="Corton C."/>
            <person name="Brown S.E."/>
            <person name="Barron A."/>
            <person name="Clark L."/>
            <person name="Doggett J."/>
            <person name="Harris B."/>
            <person name="Ormond D."/>
            <person name="Quail M.A."/>
            <person name="May G."/>
            <person name="Francis D."/>
            <person name="Knudson D."/>
            <person name="Parkhill J."/>
            <person name="Ishimaru C.A."/>
        </authorList>
    </citation>
    <scope>NUCLEOTIDE SEQUENCE [LARGE SCALE GENOMIC DNA]</scope>
    <source>
        <strain>ATCC 33113 / DSM 20744 / JCM 9667 / LMG 2889 / ICMP 2535 / C-1</strain>
    </source>
</reference>
<protein>
    <recommendedName>
        <fullName evidence="1">Aspartyl/glutamyl-tRNA(Asn/Gln) amidotransferase subunit B</fullName>
        <shortName evidence="1">Asp/Glu-ADT subunit B</shortName>
        <ecNumber evidence="1">6.3.5.-</ecNumber>
    </recommendedName>
</protein>
<evidence type="ECO:0000255" key="1">
    <source>
        <dbReference type="HAMAP-Rule" id="MF_00121"/>
    </source>
</evidence>
<proteinExistence type="inferred from homology"/>
<keyword id="KW-0067">ATP-binding</keyword>
<keyword id="KW-0436">Ligase</keyword>
<keyword id="KW-0547">Nucleotide-binding</keyword>
<keyword id="KW-0648">Protein biosynthesis</keyword>
<organism>
    <name type="scientific">Clavibacter sepedonicus</name>
    <name type="common">Clavibacter michiganensis subsp. sepedonicus</name>
    <dbReference type="NCBI Taxonomy" id="31964"/>
    <lineage>
        <taxon>Bacteria</taxon>
        <taxon>Bacillati</taxon>
        <taxon>Actinomycetota</taxon>
        <taxon>Actinomycetes</taxon>
        <taxon>Micrococcales</taxon>
        <taxon>Microbacteriaceae</taxon>
        <taxon>Clavibacter</taxon>
    </lineage>
</organism>
<comment type="function">
    <text evidence="1">Allows the formation of correctly charged Asn-tRNA(Asn) or Gln-tRNA(Gln) through the transamidation of misacylated Asp-tRNA(Asn) or Glu-tRNA(Gln) in organisms which lack either or both of asparaginyl-tRNA or glutaminyl-tRNA synthetases. The reaction takes place in the presence of glutamine and ATP through an activated phospho-Asp-tRNA(Asn) or phospho-Glu-tRNA(Gln).</text>
</comment>
<comment type="catalytic activity">
    <reaction evidence="1">
        <text>L-glutamyl-tRNA(Gln) + L-glutamine + ATP + H2O = L-glutaminyl-tRNA(Gln) + L-glutamate + ADP + phosphate + H(+)</text>
        <dbReference type="Rhea" id="RHEA:17521"/>
        <dbReference type="Rhea" id="RHEA-COMP:9681"/>
        <dbReference type="Rhea" id="RHEA-COMP:9684"/>
        <dbReference type="ChEBI" id="CHEBI:15377"/>
        <dbReference type="ChEBI" id="CHEBI:15378"/>
        <dbReference type="ChEBI" id="CHEBI:29985"/>
        <dbReference type="ChEBI" id="CHEBI:30616"/>
        <dbReference type="ChEBI" id="CHEBI:43474"/>
        <dbReference type="ChEBI" id="CHEBI:58359"/>
        <dbReference type="ChEBI" id="CHEBI:78520"/>
        <dbReference type="ChEBI" id="CHEBI:78521"/>
        <dbReference type="ChEBI" id="CHEBI:456216"/>
    </reaction>
</comment>
<comment type="catalytic activity">
    <reaction evidence="1">
        <text>L-aspartyl-tRNA(Asn) + L-glutamine + ATP + H2O = L-asparaginyl-tRNA(Asn) + L-glutamate + ADP + phosphate + 2 H(+)</text>
        <dbReference type="Rhea" id="RHEA:14513"/>
        <dbReference type="Rhea" id="RHEA-COMP:9674"/>
        <dbReference type="Rhea" id="RHEA-COMP:9677"/>
        <dbReference type="ChEBI" id="CHEBI:15377"/>
        <dbReference type="ChEBI" id="CHEBI:15378"/>
        <dbReference type="ChEBI" id="CHEBI:29985"/>
        <dbReference type="ChEBI" id="CHEBI:30616"/>
        <dbReference type="ChEBI" id="CHEBI:43474"/>
        <dbReference type="ChEBI" id="CHEBI:58359"/>
        <dbReference type="ChEBI" id="CHEBI:78515"/>
        <dbReference type="ChEBI" id="CHEBI:78516"/>
        <dbReference type="ChEBI" id="CHEBI:456216"/>
    </reaction>
</comment>
<comment type="subunit">
    <text evidence="1">Heterotrimer of A, B and C subunits.</text>
</comment>
<comment type="similarity">
    <text evidence="1">Belongs to the GatB/GatE family. GatB subfamily.</text>
</comment>
<sequence>MAKAELMDYDEAIEMFEPVLGFEVHVELNTRTKMFSDAPNFFGGEPNTNITPVDLGLPGSLPVVNEQAVKHSISLGLALGCEIAPSSRFARKNYFYPDLAKNYQISQFDEPIAFRGSVEVEMPDGRIVTVPIERAHMEEDAGKLTHVGGATGRIQGADHSLVDYNRAGVPLVEIVTDIIYGAEGEAPELAKAYMSTIRDIVVALGISDAKMERGNLRCDANISLSPRGSGKLGTRTETKNVNSLRSVERAIRYEIQRQAAILAAGGTITQETRHWHEDTGRTSAGRPKSDADDYRYFPEPDLLPVQPSAELIEELRVALPESPAIRRRRLKAEWGFTDLEFQDVVNSGLLTELVDTVEAGAAPQAARKWWTGEIARIANARGVDAATLITAEQVASVIELVEAGTLTNRLARDVIEGVIDGEGTAQEVVDARGLAVVSDDGPLIAAIDEALQAQPDVLAKIRDGKVQAAGAVIGAVMKAMRGQADAARVRELVLERAQAS</sequence>
<accession>B0RGB2</accession>